<geneLocation type="chloroplast"/>
<protein>
    <recommendedName>
        <fullName>Acetolactate synthase large subunit</fullName>
        <shortName>AHAS</shortName>
        <ecNumber>2.2.1.6</ecNumber>
    </recommendedName>
    <alternativeName>
        <fullName>Acetohydroxy-acid synthase large subunit</fullName>
        <shortName>ALS</shortName>
    </alternativeName>
</protein>
<feature type="chain" id="PRO_0000090811" description="Acetolactate synthase large subunit">
    <location>
        <begin position="1"/>
        <end position="590"/>
    </location>
</feature>
<feature type="region of interest" description="Thiamine pyrophosphate binding">
    <location>
        <begin position="405"/>
        <end position="484"/>
    </location>
</feature>
<feature type="binding site" evidence="1">
    <location>
        <position position="61"/>
    </location>
    <ligand>
        <name>thiamine diphosphate</name>
        <dbReference type="ChEBI" id="CHEBI:58937"/>
    </ligand>
</feature>
<feature type="binding site" evidence="1">
    <location>
        <position position="163"/>
    </location>
    <ligand>
        <name>FAD</name>
        <dbReference type="ChEBI" id="CHEBI:57692"/>
    </ligand>
</feature>
<feature type="binding site" evidence="1">
    <location>
        <begin position="271"/>
        <end position="292"/>
    </location>
    <ligand>
        <name>FAD</name>
        <dbReference type="ChEBI" id="CHEBI:57692"/>
    </ligand>
</feature>
<feature type="binding site" evidence="1">
    <location>
        <begin position="314"/>
        <end position="333"/>
    </location>
    <ligand>
        <name>FAD</name>
        <dbReference type="ChEBI" id="CHEBI:57692"/>
    </ligand>
</feature>
<feature type="binding site" evidence="1">
    <location>
        <position position="455"/>
    </location>
    <ligand>
        <name>Mg(2+)</name>
        <dbReference type="ChEBI" id="CHEBI:18420"/>
    </ligand>
</feature>
<feature type="binding site" evidence="1">
    <location>
        <position position="482"/>
    </location>
    <ligand>
        <name>Mg(2+)</name>
        <dbReference type="ChEBI" id="CHEBI:18420"/>
    </ligand>
</feature>
<proteinExistence type="inferred from homology"/>
<reference key="1">
    <citation type="journal article" date="1995" name="Plant Mol. Biol. Rep.">
        <title>Complete nucleotide sequence of the Porphyra purpurea chloroplast genome.</title>
        <authorList>
            <person name="Reith M.E."/>
            <person name="Munholland J."/>
        </authorList>
    </citation>
    <scope>NUCLEOTIDE SEQUENCE [LARGE SCALE GENOMIC DNA]</scope>
    <source>
        <strain>Avonport</strain>
    </source>
</reference>
<gene>
    <name type="primary">ilvB</name>
</gene>
<keyword id="KW-0028">Amino-acid biosynthesis</keyword>
<keyword id="KW-0100">Branched-chain amino acid biosynthesis</keyword>
<keyword id="KW-0150">Chloroplast</keyword>
<keyword id="KW-0274">FAD</keyword>
<keyword id="KW-0285">Flavoprotein</keyword>
<keyword id="KW-0460">Magnesium</keyword>
<keyword id="KW-0479">Metal-binding</keyword>
<keyword id="KW-0934">Plastid</keyword>
<keyword id="KW-0786">Thiamine pyrophosphate</keyword>
<keyword id="KW-0808">Transferase</keyword>
<accession>P69683</accession>
<accession>P31594</accession>
<name>ILVB_PORPU</name>
<sequence>MLSKQIIGSEKTGRFALLDSIVRHGVIHIFGYPGGAILPIYDELYAWEELSLIKNILVRHEQGASHAADAYSRSTGKVGVCFATSGPGATNLVSGIATAHIDSVPILAITGQVGRPFIGTDAFQEVDIFGITLPIVKHSYVVRDPRDMSRIVAEAFYICKHGRPGPVLIDVPKDVGLEKFNYFSVEPGQVKIPGCRPLSNLKSRQILMAAKMIQQSSQPLLYIGGGAIISDAHSIIKELVDLYKIPVTTTLMGKGIFNEDSEFCLGMLGMHGTAYANFAVSECDLLIALGARFDDRVTGKLDEFACNAQVIHVDIDPAEVGKNRIPQVAIVGDVTEVVTSLLNLLKNNFKPYPEQIISWQERIHRWRQQYPLLVPKKSTSISPQEILVTTNQLAQDAYFTTDVGQHQMWSAQFLKVKSKHWISSAGLGTMGYGLPAAIGAQVAHPNELVICVSGDSSFQMNMQELGTIAQYKLPIKIVIINNRWQGMVRQWQQAFYGERYSHSRMTEGAPNFQKLAEAFGIKAFTVNNRQNMESSLKDAMKYPGPVLLDCQVTENENCYPMVAPGKSNAQMIGIAKPQRGTASNYVSRNI</sequence>
<organism>
    <name type="scientific">Porphyra purpurea</name>
    <name type="common">Red seaweed</name>
    <name type="synonym">Ulva purpurea</name>
    <dbReference type="NCBI Taxonomy" id="2787"/>
    <lineage>
        <taxon>Eukaryota</taxon>
        <taxon>Rhodophyta</taxon>
        <taxon>Bangiophyceae</taxon>
        <taxon>Bangiales</taxon>
        <taxon>Bangiaceae</taxon>
        <taxon>Porphyra</taxon>
    </lineage>
</organism>
<comment type="catalytic activity">
    <reaction>
        <text>2 pyruvate + H(+) = (2S)-2-acetolactate + CO2</text>
        <dbReference type="Rhea" id="RHEA:25249"/>
        <dbReference type="ChEBI" id="CHEBI:15361"/>
        <dbReference type="ChEBI" id="CHEBI:15378"/>
        <dbReference type="ChEBI" id="CHEBI:16526"/>
        <dbReference type="ChEBI" id="CHEBI:58476"/>
        <dbReference type="EC" id="2.2.1.6"/>
    </reaction>
</comment>
<comment type="cofactor">
    <cofactor evidence="1">
        <name>Mg(2+)</name>
        <dbReference type="ChEBI" id="CHEBI:18420"/>
    </cofactor>
    <text evidence="1">Binds 1 Mg(2+) ion per subunit.</text>
</comment>
<comment type="cofactor">
    <cofactor evidence="1">
        <name>thiamine diphosphate</name>
        <dbReference type="ChEBI" id="CHEBI:58937"/>
    </cofactor>
    <text evidence="1">Binds 1 thiamine pyrophosphate per subunit.</text>
</comment>
<comment type="pathway">
    <text>Amino-acid biosynthesis; L-isoleucine biosynthesis; L-isoleucine from 2-oxobutanoate: step 1/4.</text>
</comment>
<comment type="pathway">
    <text>Amino-acid biosynthesis; L-valine biosynthesis; L-valine from pyruvate: step 1/4.</text>
</comment>
<comment type="subunit">
    <text evidence="1">Dimer of large and small chains.</text>
</comment>
<comment type="subcellular location">
    <subcellularLocation>
        <location>Plastid</location>
        <location>Chloroplast</location>
    </subcellularLocation>
</comment>
<comment type="similarity">
    <text evidence="2">Belongs to the TPP enzyme family.</text>
</comment>
<dbReference type="EC" id="2.2.1.6"/>
<dbReference type="EMBL" id="U38804">
    <property type="protein sequence ID" value="AAC08216.1"/>
    <property type="molecule type" value="Genomic_DNA"/>
</dbReference>
<dbReference type="PIR" id="S73251">
    <property type="entry name" value="S73251"/>
</dbReference>
<dbReference type="RefSeq" id="NP_053940.1">
    <property type="nucleotide sequence ID" value="NC_000925.1"/>
</dbReference>
<dbReference type="SMR" id="P69683"/>
<dbReference type="GeneID" id="809962"/>
<dbReference type="UniPathway" id="UPA00047">
    <property type="reaction ID" value="UER00055"/>
</dbReference>
<dbReference type="UniPathway" id="UPA00049">
    <property type="reaction ID" value="UER00059"/>
</dbReference>
<dbReference type="GO" id="GO:0005948">
    <property type="term" value="C:acetolactate synthase complex"/>
    <property type="evidence" value="ECO:0007669"/>
    <property type="project" value="TreeGrafter"/>
</dbReference>
<dbReference type="GO" id="GO:0009507">
    <property type="term" value="C:chloroplast"/>
    <property type="evidence" value="ECO:0007669"/>
    <property type="project" value="UniProtKB-SubCell"/>
</dbReference>
<dbReference type="GO" id="GO:0003984">
    <property type="term" value="F:acetolactate synthase activity"/>
    <property type="evidence" value="ECO:0007669"/>
    <property type="project" value="UniProtKB-EC"/>
</dbReference>
<dbReference type="GO" id="GO:0050660">
    <property type="term" value="F:flavin adenine dinucleotide binding"/>
    <property type="evidence" value="ECO:0007669"/>
    <property type="project" value="InterPro"/>
</dbReference>
<dbReference type="GO" id="GO:0000287">
    <property type="term" value="F:magnesium ion binding"/>
    <property type="evidence" value="ECO:0007669"/>
    <property type="project" value="InterPro"/>
</dbReference>
<dbReference type="GO" id="GO:0030976">
    <property type="term" value="F:thiamine pyrophosphate binding"/>
    <property type="evidence" value="ECO:0007669"/>
    <property type="project" value="InterPro"/>
</dbReference>
<dbReference type="GO" id="GO:0009097">
    <property type="term" value="P:isoleucine biosynthetic process"/>
    <property type="evidence" value="ECO:0007669"/>
    <property type="project" value="UniProtKB-UniPathway"/>
</dbReference>
<dbReference type="GO" id="GO:0009099">
    <property type="term" value="P:L-valine biosynthetic process"/>
    <property type="evidence" value="ECO:0007669"/>
    <property type="project" value="UniProtKB-UniPathway"/>
</dbReference>
<dbReference type="CDD" id="cd02015">
    <property type="entry name" value="TPP_AHAS"/>
    <property type="match status" value="1"/>
</dbReference>
<dbReference type="CDD" id="cd07035">
    <property type="entry name" value="TPP_PYR_POX_like"/>
    <property type="match status" value="1"/>
</dbReference>
<dbReference type="FunFam" id="3.40.50.1220:FF:000008">
    <property type="entry name" value="Acetolactate synthase"/>
    <property type="match status" value="1"/>
</dbReference>
<dbReference type="FunFam" id="3.40.50.970:FF:000007">
    <property type="entry name" value="Acetolactate synthase"/>
    <property type="match status" value="1"/>
</dbReference>
<dbReference type="Gene3D" id="3.40.50.970">
    <property type="match status" value="2"/>
</dbReference>
<dbReference type="Gene3D" id="3.40.50.1220">
    <property type="entry name" value="TPP-binding domain"/>
    <property type="match status" value="1"/>
</dbReference>
<dbReference type="InterPro" id="IPR012846">
    <property type="entry name" value="Acetolactate_synth_lsu"/>
</dbReference>
<dbReference type="InterPro" id="IPR039368">
    <property type="entry name" value="AHAS_TPP"/>
</dbReference>
<dbReference type="InterPro" id="IPR029035">
    <property type="entry name" value="DHS-like_NAD/FAD-binding_dom"/>
</dbReference>
<dbReference type="InterPro" id="IPR029061">
    <property type="entry name" value="THDP-binding"/>
</dbReference>
<dbReference type="InterPro" id="IPR012000">
    <property type="entry name" value="Thiamin_PyroP_enz_cen_dom"/>
</dbReference>
<dbReference type="InterPro" id="IPR012001">
    <property type="entry name" value="Thiamin_PyroP_enz_TPP-bd_dom"/>
</dbReference>
<dbReference type="InterPro" id="IPR000399">
    <property type="entry name" value="TPP-bd_CS"/>
</dbReference>
<dbReference type="InterPro" id="IPR045229">
    <property type="entry name" value="TPP_enz"/>
</dbReference>
<dbReference type="InterPro" id="IPR011766">
    <property type="entry name" value="TPP_enzyme_TPP-bd"/>
</dbReference>
<dbReference type="NCBIfam" id="TIGR00118">
    <property type="entry name" value="acolac_lg"/>
    <property type="match status" value="1"/>
</dbReference>
<dbReference type="NCBIfam" id="NF005651">
    <property type="entry name" value="PRK07418.1"/>
    <property type="match status" value="1"/>
</dbReference>
<dbReference type="PANTHER" id="PTHR18968:SF13">
    <property type="entry name" value="ACETOLACTATE SYNTHASE CATALYTIC SUBUNIT, MITOCHONDRIAL"/>
    <property type="match status" value="1"/>
</dbReference>
<dbReference type="PANTHER" id="PTHR18968">
    <property type="entry name" value="THIAMINE PYROPHOSPHATE ENZYMES"/>
    <property type="match status" value="1"/>
</dbReference>
<dbReference type="Pfam" id="PF02775">
    <property type="entry name" value="TPP_enzyme_C"/>
    <property type="match status" value="1"/>
</dbReference>
<dbReference type="Pfam" id="PF00205">
    <property type="entry name" value="TPP_enzyme_M"/>
    <property type="match status" value="1"/>
</dbReference>
<dbReference type="Pfam" id="PF02776">
    <property type="entry name" value="TPP_enzyme_N"/>
    <property type="match status" value="1"/>
</dbReference>
<dbReference type="SUPFAM" id="SSF52467">
    <property type="entry name" value="DHS-like NAD/FAD-binding domain"/>
    <property type="match status" value="1"/>
</dbReference>
<dbReference type="SUPFAM" id="SSF52518">
    <property type="entry name" value="Thiamin diphosphate-binding fold (THDP-binding)"/>
    <property type="match status" value="2"/>
</dbReference>
<dbReference type="PROSITE" id="PS00187">
    <property type="entry name" value="TPP_ENZYMES"/>
    <property type="match status" value="1"/>
</dbReference>
<evidence type="ECO:0000250" key="1"/>
<evidence type="ECO:0000305" key="2"/>